<proteinExistence type="inferred from homology"/>
<name>YCF3_MARPO</name>
<feature type="chain" id="PRO_0000217808" description="Photosystem I assembly protein Ycf3">
    <location>
        <begin position="1"/>
        <end position="167"/>
    </location>
</feature>
<feature type="repeat" description="TPR 1">
    <location>
        <begin position="35"/>
        <end position="68"/>
    </location>
</feature>
<feature type="repeat" description="TPR 2">
    <location>
        <begin position="72"/>
        <end position="105"/>
    </location>
</feature>
<feature type="repeat" description="TPR 3">
    <location>
        <begin position="120"/>
        <end position="153"/>
    </location>
</feature>
<protein>
    <recommendedName>
        <fullName evidence="1">Photosystem I assembly protein Ycf3</fullName>
    </recommendedName>
</protein>
<comment type="function">
    <text evidence="1">Essential for the assembly of the photosystem I (PSI) complex. May act as a chaperone-like factor to guide the assembly of the PSI subunits.</text>
</comment>
<comment type="subcellular location">
    <subcellularLocation>
        <location evidence="1">Plastid</location>
        <location evidence="1">Chloroplast thylakoid membrane</location>
        <topology evidence="1">Peripheral membrane protein</topology>
    </subcellularLocation>
</comment>
<comment type="similarity">
    <text evidence="1">Belongs to the Ycf3 family.</text>
</comment>
<dbReference type="EMBL" id="X04465">
    <property type="status" value="NOT_ANNOTATED_CDS"/>
    <property type="molecule type" value="Genomic_DNA"/>
</dbReference>
<dbReference type="PIR" id="A05041">
    <property type="entry name" value="A05041"/>
</dbReference>
<dbReference type="PIR" id="S01603">
    <property type="entry name" value="S01603"/>
</dbReference>
<dbReference type="SMR" id="P12202"/>
<dbReference type="GO" id="GO:0009535">
    <property type="term" value="C:chloroplast thylakoid membrane"/>
    <property type="evidence" value="ECO:0007669"/>
    <property type="project" value="UniProtKB-SubCell"/>
</dbReference>
<dbReference type="GO" id="GO:0015979">
    <property type="term" value="P:photosynthesis"/>
    <property type="evidence" value="ECO:0007669"/>
    <property type="project" value="UniProtKB-UniRule"/>
</dbReference>
<dbReference type="FunFam" id="1.25.40.10:FF:000004">
    <property type="entry name" value="Photosystem I assembly protein Ycf3"/>
    <property type="match status" value="1"/>
</dbReference>
<dbReference type="Gene3D" id="1.25.40.10">
    <property type="entry name" value="Tetratricopeptide repeat domain"/>
    <property type="match status" value="1"/>
</dbReference>
<dbReference type="HAMAP" id="MF_00439">
    <property type="entry name" value="Ycf3"/>
    <property type="match status" value="1"/>
</dbReference>
<dbReference type="InterPro" id="IPR022818">
    <property type="entry name" value="PSI_Ycf3_assembly"/>
</dbReference>
<dbReference type="InterPro" id="IPR011990">
    <property type="entry name" value="TPR-like_helical_dom_sf"/>
</dbReference>
<dbReference type="InterPro" id="IPR019734">
    <property type="entry name" value="TPR_rpt"/>
</dbReference>
<dbReference type="InterPro" id="IPR051685">
    <property type="entry name" value="Ycf3/AcsC/BcsC/TPR_MFPF"/>
</dbReference>
<dbReference type="NCBIfam" id="NF002725">
    <property type="entry name" value="PRK02603.1"/>
    <property type="match status" value="1"/>
</dbReference>
<dbReference type="PANTHER" id="PTHR44943">
    <property type="entry name" value="CELLULOSE SYNTHASE OPERON PROTEIN C"/>
    <property type="match status" value="1"/>
</dbReference>
<dbReference type="PANTHER" id="PTHR44943:SF8">
    <property type="entry name" value="TPR REPEAT-CONTAINING PROTEIN MJ0263"/>
    <property type="match status" value="1"/>
</dbReference>
<dbReference type="Pfam" id="PF00515">
    <property type="entry name" value="TPR_1"/>
    <property type="match status" value="1"/>
</dbReference>
<dbReference type="SMART" id="SM00028">
    <property type="entry name" value="TPR"/>
    <property type="match status" value="3"/>
</dbReference>
<dbReference type="SUPFAM" id="SSF48452">
    <property type="entry name" value="TPR-like"/>
    <property type="match status" value="1"/>
</dbReference>
<dbReference type="PROSITE" id="PS50005">
    <property type="entry name" value="TPR"/>
    <property type="match status" value="3"/>
</dbReference>
<dbReference type="PROSITE" id="PS50293">
    <property type="entry name" value="TPR_REGION"/>
    <property type="match status" value="1"/>
</dbReference>
<geneLocation type="chloroplast"/>
<gene>
    <name evidence="1" type="primary">ycf3</name>
</gene>
<keyword id="KW-0150">Chloroplast</keyword>
<keyword id="KW-0472">Membrane</keyword>
<keyword id="KW-0602">Photosynthesis</keyword>
<keyword id="KW-0934">Plastid</keyword>
<keyword id="KW-0677">Repeat</keyword>
<keyword id="KW-0793">Thylakoid</keyword>
<keyword id="KW-0802">TPR repeat</keyword>
<accession>P12202</accession>
<reference key="1">
    <citation type="journal article" date="1988" name="J. Mol. Biol.">
        <title>Structure and organization of Marchantia polymorpha chloroplast genome. II. Gene organization of the large single copy region from rps'12 to atpB.</title>
        <authorList>
            <person name="Umesono K."/>
            <person name="Inokuchi H."/>
            <person name="Shiki Y."/>
            <person name="Takeuchi M."/>
            <person name="Chang Z."/>
            <person name="Fukuzawa H."/>
            <person name="Kohchi T."/>
            <person name="Shirai H."/>
            <person name="Ohyama K."/>
            <person name="Ozeki H."/>
        </authorList>
    </citation>
    <scope>NUCLEOTIDE SEQUENCE [GENOMIC DNA]</scope>
</reference>
<reference key="2">
    <citation type="journal article" date="1986" name="Nature">
        <title>Chloroplast gene organization deduced from complete sequence of liverwort Marchantia polymorpha chloroplast DNA.</title>
        <authorList>
            <person name="Ohyama K."/>
            <person name="Fukuzawa H."/>
            <person name="Kohchi T."/>
            <person name="Shirai H."/>
            <person name="Sano T."/>
            <person name="Sano S."/>
            <person name="Umesono K."/>
            <person name="Shiki Y."/>
            <person name="Takeuchi M."/>
            <person name="Chang Z."/>
            <person name="Aota S."/>
            <person name="Inokuchi H."/>
            <person name="Ozeki H."/>
        </authorList>
    </citation>
    <scope>NUCLEOTIDE SEQUENCE [LARGE SCALE GENOMIC DNA]</scope>
</reference>
<sequence>MPRSQKNDNFIDKTFTIVADILLRIIPTTQREKEAFTYYRDGMSAQSEGEYAEALQNYYEAMRLEIDPYDRSYILYNIGLIHTSNGEHAKALEYYFQALERNPSLPQAFNNMAVICHYRGEQAIQQGDPEASETWFDQAAEYWKQAILLAPSNYIEAHNWLKMTGRF</sequence>
<organism>
    <name type="scientific">Marchantia polymorpha</name>
    <name type="common">Common liverwort</name>
    <name type="synonym">Marchantia aquatica</name>
    <dbReference type="NCBI Taxonomy" id="3197"/>
    <lineage>
        <taxon>Eukaryota</taxon>
        <taxon>Viridiplantae</taxon>
        <taxon>Streptophyta</taxon>
        <taxon>Embryophyta</taxon>
        <taxon>Marchantiophyta</taxon>
        <taxon>Marchantiopsida</taxon>
        <taxon>Marchantiidae</taxon>
        <taxon>Marchantiales</taxon>
        <taxon>Marchantiaceae</taxon>
        <taxon>Marchantia</taxon>
    </lineage>
</organism>
<evidence type="ECO:0000255" key="1">
    <source>
        <dbReference type="HAMAP-Rule" id="MF_00439"/>
    </source>
</evidence>